<name>PROQ_ECO5E</name>
<protein>
    <recommendedName>
        <fullName evidence="1">RNA chaperone ProQ</fullName>
    </recommendedName>
</protein>
<reference key="1">
    <citation type="journal article" date="2011" name="Proc. Natl. Acad. Sci. U.S.A.">
        <title>Genomic anatomy of Escherichia coli O157:H7 outbreaks.</title>
        <authorList>
            <person name="Eppinger M."/>
            <person name="Mammel M.K."/>
            <person name="Leclerc J.E."/>
            <person name="Ravel J."/>
            <person name="Cebula T.A."/>
        </authorList>
    </citation>
    <scope>NUCLEOTIDE SEQUENCE [LARGE SCALE GENOMIC DNA]</scope>
    <source>
        <strain>EC4115 / EHEC</strain>
    </source>
</reference>
<evidence type="ECO:0000255" key="1">
    <source>
        <dbReference type="HAMAP-Rule" id="MF_00749"/>
    </source>
</evidence>
<evidence type="ECO:0000256" key="2">
    <source>
        <dbReference type="SAM" id="MobiDB-lite"/>
    </source>
</evidence>
<accession>B5YQX5</accession>
<organism>
    <name type="scientific">Escherichia coli O157:H7 (strain EC4115 / EHEC)</name>
    <dbReference type="NCBI Taxonomy" id="444450"/>
    <lineage>
        <taxon>Bacteria</taxon>
        <taxon>Pseudomonadati</taxon>
        <taxon>Pseudomonadota</taxon>
        <taxon>Gammaproteobacteria</taxon>
        <taxon>Enterobacterales</taxon>
        <taxon>Enterobacteriaceae</taxon>
        <taxon>Escherichia</taxon>
    </lineage>
</organism>
<feature type="chain" id="PRO_1000192659" description="RNA chaperone ProQ">
    <location>
        <begin position="1"/>
        <end position="232"/>
    </location>
</feature>
<feature type="region of interest" description="Disordered" evidence="2">
    <location>
        <begin position="105"/>
        <end position="182"/>
    </location>
</feature>
<feature type="compositionally biased region" description="Basic and acidic residues" evidence="2">
    <location>
        <begin position="117"/>
        <end position="136"/>
    </location>
</feature>
<feature type="compositionally biased region" description="Basic residues" evidence="2">
    <location>
        <begin position="137"/>
        <end position="146"/>
    </location>
</feature>
<feature type="compositionally biased region" description="Basic and acidic residues" evidence="2">
    <location>
        <begin position="147"/>
        <end position="177"/>
    </location>
</feature>
<gene>
    <name evidence="1" type="primary">proQ</name>
    <name type="ordered locus">ECH74115_2564</name>
</gene>
<comment type="function">
    <text evidence="1">RNA chaperone with significant RNA binding, RNA strand exchange and RNA duplexing activities. May regulate ProP activity through an RNA-based, post-transcriptional mechanism.</text>
</comment>
<comment type="subcellular location">
    <subcellularLocation>
        <location evidence="1">Cytoplasm</location>
    </subcellularLocation>
</comment>
<comment type="similarity">
    <text evidence="1">Belongs to the ProQ family.</text>
</comment>
<dbReference type="EMBL" id="CP001164">
    <property type="protein sequence ID" value="ACI37948.1"/>
    <property type="molecule type" value="Genomic_DNA"/>
</dbReference>
<dbReference type="RefSeq" id="WP_000431368.1">
    <property type="nucleotide sequence ID" value="NC_011353.1"/>
</dbReference>
<dbReference type="SMR" id="B5YQX5"/>
<dbReference type="GeneID" id="75171902"/>
<dbReference type="KEGG" id="ecf:ECH74115_2564"/>
<dbReference type="HOGENOM" id="CLU_113254_0_0_6"/>
<dbReference type="GO" id="GO:0005829">
    <property type="term" value="C:cytosol"/>
    <property type="evidence" value="ECO:0007669"/>
    <property type="project" value="TreeGrafter"/>
</dbReference>
<dbReference type="GO" id="GO:0033592">
    <property type="term" value="F:RNA strand annealing activity"/>
    <property type="evidence" value="ECO:0007669"/>
    <property type="project" value="UniProtKB-UniRule"/>
</dbReference>
<dbReference type="GO" id="GO:0034057">
    <property type="term" value="F:RNA strand-exchange activity"/>
    <property type="evidence" value="ECO:0007669"/>
    <property type="project" value="UniProtKB-UniRule"/>
</dbReference>
<dbReference type="GO" id="GO:0010608">
    <property type="term" value="P:post-transcriptional regulation of gene expression"/>
    <property type="evidence" value="ECO:0007669"/>
    <property type="project" value="InterPro"/>
</dbReference>
<dbReference type="FunFam" id="1.10.1710.10:FF:000001">
    <property type="entry name" value="RNA chaperone ProQ"/>
    <property type="match status" value="1"/>
</dbReference>
<dbReference type="Gene3D" id="1.10.1710.10">
    <property type="entry name" value="ProQ/FinO domain"/>
    <property type="match status" value="1"/>
</dbReference>
<dbReference type="HAMAP" id="MF_00749">
    <property type="entry name" value="ProQ"/>
    <property type="match status" value="1"/>
</dbReference>
<dbReference type="InterPro" id="IPR023529">
    <property type="entry name" value="ProQ"/>
</dbReference>
<dbReference type="InterPro" id="IPR016103">
    <property type="entry name" value="ProQ/FinO"/>
</dbReference>
<dbReference type="InterPro" id="IPR036442">
    <property type="entry name" value="ProQ/FinO_sf"/>
</dbReference>
<dbReference type="InterPro" id="IPR035236">
    <property type="entry name" value="ProQ_C"/>
</dbReference>
<dbReference type="NCBIfam" id="NF003434">
    <property type="entry name" value="PRK04950.1"/>
    <property type="match status" value="1"/>
</dbReference>
<dbReference type="PANTHER" id="PTHR38106">
    <property type="entry name" value="RNA CHAPERONE PROQ"/>
    <property type="match status" value="1"/>
</dbReference>
<dbReference type="PANTHER" id="PTHR38106:SF1">
    <property type="entry name" value="RNA CHAPERONE PROQ"/>
    <property type="match status" value="1"/>
</dbReference>
<dbReference type="Pfam" id="PF04352">
    <property type="entry name" value="ProQ"/>
    <property type="match status" value="1"/>
</dbReference>
<dbReference type="Pfam" id="PF17516">
    <property type="entry name" value="ProQ_C"/>
    <property type="match status" value="1"/>
</dbReference>
<dbReference type="SMART" id="SM00945">
    <property type="entry name" value="ProQ"/>
    <property type="match status" value="1"/>
</dbReference>
<dbReference type="SUPFAM" id="SSF48657">
    <property type="entry name" value="FinO-like"/>
    <property type="match status" value="1"/>
</dbReference>
<keyword id="KW-0143">Chaperone</keyword>
<keyword id="KW-0963">Cytoplasm</keyword>
<keyword id="KW-0694">RNA-binding</keyword>
<sequence>MENQPKLNSSKEVIAFLAERFPHCFSAEGEARPLKIGIFQDLVDRVAGEMNLSKTQLRSALRLYTSSWRYLYGVKPGATRVDLDGNPCGELDEQHVEHARKQLEEAKARVQAQRAEQQAKKREAAAAAGEKEDAPRRERKPRPTTPRRKEGAERKPRAQKPVEKAPKTAKAPREEQHTPVSDISALTVGQALKVKAGQNAMDATVLEITKDGVRVQLNSGMSLIVRAEHLVF</sequence>
<proteinExistence type="inferred from homology"/>